<name>ZACN_CANLF</name>
<sequence length="409" mass="45529">MAPRLLLLLLAFLRLGTTGPLVQGRGFRSPTVAWPSFFNFNQPQGVQETIQIPNNGSAPLLVDVQVFVSNVFNVDILRYTVSSMLLLRLSWVDTRLAWNASLYPQHAVTLPWDSLWTPGLTIQEALWVDWQDQSPRARVGPDGHVDLYLALTTETNCDFELLHFPRDQSDCNLSFYALSNTVLELEFRAHAVNEIVSVKREYVVWGLETQIPPRQLVPCFQVTLRLQNTALKAIIALLVPGEALLLADMCGGLLPLRATERIAYKVTLLLGYLVFHSSLVQALPSSSSCNPLLIYYFTVLLLLLFISTMETVLLAALQARGHLSARSSPIPTPRGEQQDHGDLGPHPEEAPGVKESRSWAEAADHIFFLVYVVGVVCSQFFFIGFWMWATCKSDPAPGEAIPHGGQPRL</sequence>
<accession>Q866Y9</accession>
<gene>
    <name evidence="2" type="primary">ZACN</name>
    <name evidence="7" type="synonym">LGICZ</name>
</gene>
<feature type="signal peptide" evidence="3">
    <location>
        <begin position="1"/>
        <end position="18"/>
    </location>
</feature>
<feature type="chain" id="PRO_0000317164" description="Ligand-gated cation channel ZACN">
    <location>
        <begin position="19"/>
        <end position="409"/>
    </location>
</feature>
<feature type="topological domain" description="Extracellular" evidence="3">
    <location>
        <begin position="19"/>
        <end position="233"/>
    </location>
</feature>
<feature type="transmembrane region" description="Helical; Name=1" evidence="3">
    <location>
        <begin position="234"/>
        <end position="254"/>
    </location>
</feature>
<feature type="topological domain" description="Cytoplasmic" evidence="3">
    <location>
        <begin position="255"/>
        <end position="265"/>
    </location>
</feature>
<feature type="transmembrane region" description="Helical; Name=2" evidence="3">
    <location>
        <begin position="266"/>
        <end position="286"/>
    </location>
</feature>
<feature type="topological domain" description="Extracellular" evidence="3">
    <location>
        <begin position="287"/>
        <end position="296"/>
    </location>
</feature>
<feature type="transmembrane region" description="Helical; Name=3" evidence="3">
    <location>
        <begin position="297"/>
        <end position="317"/>
    </location>
</feature>
<feature type="topological domain" description="Cytoplasmic" evidence="3">
    <location>
        <begin position="318"/>
        <end position="365"/>
    </location>
</feature>
<feature type="transmembrane region" description="Helical; Name=4" evidence="3">
    <location>
        <begin position="366"/>
        <end position="386"/>
    </location>
</feature>
<feature type="topological domain" description="Extracellular" evidence="3">
    <location>
        <begin position="387"/>
        <end position="409"/>
    </location>
</feature>
<feature type="region of interest" description="Disordered" evidence="4">
    <location>
        <begin position="325"/>
        <end position="354"/>
    </location>
</feature>
<feature type="compositionally biased region" description="Basic and acidic residues" evidence="4">
    <location>
        <begin position="336"/>
        <end position="354"/>
    </location>
</feature>
<feature type="glycosylation site" description="N-linked (GlcNAc...) asparagine" evidence="3">
    <location>
        <position position="55"/>
    </location>
</feature>
<feature type="glycosylation site" description="N-linked (GlcNAc...) asparagine" evidence="3">
    <location>
        <position position="99"/>
    </location>
</feature>
<feature type="disulfide bond" evidence="1">
    <location>
        <begin position="157"/>
        <end position="171"/>
    </location>
</feature>
<keyword id="KW-1003">Cell membrane</keyword>
<keyword id="KW-1015">Disulfide bond</keyword>
<keyword id="KW-0325">Glycoprotein</keyword>
<keyword id="KW-0407">Ion channel</keyword>
<keyword id="KW-0406">Ion transport</keyword>
<keyword id="KW-1071">Ligand-gated ion channel</keyword>
<keyword id="KW-0472">Membrane</keyword>
<keyword id="KW-0675">Receptor</keyword>
<keyword id="KW-1185">Reference proteome</keyword>
<keyword id="KW-0732">Signal</keyword>
<keyword id="KW-0812">Transmembrane</keyword>
<keyword id="KW-1133">Transmembrane helix</keyword>
<keyword id="KW-0813">Transport</keyword>
<keyword id="KW-0862">Zinc</keyword>
<organism>
    <name type="scientific">Canis lupus familiaris</name>
    <name type="common">Dog</name>
    <name type="synonym">Canis familiaris</name>
    <dbReference type="NCBI Taxonomy" id="9615"/>
    <lineage>
        <taxon>Eukaryota</taxon>
        <taxon>Metazoa</taxon>
        <taxon>Chordata</taxon>
        <taxon>Craniata</taxon>
        <taxon>Vertebrata</taxon>
        <taxon>Euteleostomi</taxon>
        <taxon>Mammalia</taxon>
        <taxon>Eutheria</taxon>
        <taxon>Laurasiatheria</taxon>
        <taxon>Carnivora</taxon>
        <taxon>Caniformia</taxon>
        <taxon>Canidae</taxon>
        <taxon>Canis</taxon>
    </lineage>
</organism>
<proteinExistence type="inferred from homology"/>
<comment type="function">
    <text evidence="2">Ligand-gated cation channel that allows the movement of sodium and potassium monoatomic cations across cell membranes when activated by zinc (Zn2+), copper (Cu2+), and changes in pH. Could also transport cesium.</text>
</comment>
<comment type="catalytic activity">
    <reaction evidence="2">
        <text>Na(+)(in) = Na(+)(out)</text>
        <dbReference type="Rhea" id="RHEA:34963"/>
        <dbReference type="ChEBI" id="CHEBI:29101"/>
    </reaction>
</comment>
<comment type="catalytic activity">
    <reaction evidence="2">
        <text>K(+)(in) = K(+)(out)</text>
        <dbReference type="Rhea" id="RHEA:29463"/>
        <dbReference type="ChEBI" id="CHEBI:29103"/>
    </reaction>
</comment>
<comment type="subcellular location">
    <subcellularLocation>
        <location evidence="2">Cell membrane</location>
        <topology evidence="3">Multi-pass membrane protein</topology>
    </subcellularLocation>
</comment>
<comment type="PTM">
    <text evidence="2">Glycosylated.</text>
</comment>
<comment type="similarity">
    <text evidence="6">Belongs to the ligand-gated ion channel (TC 1.A.9) family.</text>
</comment>
<protein>
    <recommendedName>
        <fullName evidence="2">Ligand-gated cation channel ZACN</fullName>
    </recommendedName>
    <alternativeName>
        <fullName evidence="5">Zinc-activated channel</fullName>
    </alternativeName>
</protein>
<reference key="1">
    <citation type="journal article" date="2003" name="J. Biol. Chem.">
        <title>A novel class of ligand-gated ion channel is activated by Zn2+.</title>
        <authorList>
            <person name="Davies P.A."/>
            <person name="Wang W."/>
            <person name="Hales T.G."/>
            <person name="Kirkness E.F."/>
        </authorList>
    </citation>
    <scope>NUCLEOTIDE SEQUENCE [GENOMIC DNA]</scope>
</reference>
<dbReference type="EMBL" id="AF512523">
    <property type="protein sequence ID" value="AAO20972.1"/>
    <property type="molecule type" value="Genomic_DNA"/>
</dbReference>
<dbReference type="RefSeq" id="NP_001010955.1">
    <property type="nucleotide sequence ID" value="NM_001010955.1"/>
</dbReference>
<dbReference type="SMR" id="Q866Y9"/>
<dbReference type="FunCoup" id="Q866Y9">
    <property type="interactions" value="15"/>
</dbReference>
<dbReference type="STRING" id="9615.ENSCAFP00000007487"/>
<dbReference type="GlyCosmos" id="Q866Y9">
    <property type="glycosylation" value="2 sites, No reported glycans"/>
</dbReference>
<dbReference type="PaxDb" id="9612-ENSCAFP00000007487"/>
<dbReference type="GeneID" id="483326"/>
<dbReference type="KEGG" id="cfa:483326"/>
<dbReference type="CTD" id="353174"/>
<dbReference type="eggNOG" id="KOG3645">
    <property type="taxonomic scope" value="Eukaryota"/>
</dbReference>
<dbReference type="HOGENOM" id="CLU_672608_0_0_1"/>
<dbReference type="InParanoid" id="Q866Y9"/>
<dbReference type="OMA" id="TWPLVHG"/>
<dbReference type="OrthoDB" id="5920062at2759"/>
<dbReference type="TreeFam" id="TF315605"/>
<dbReference type="Proteomes" id="UP000002254">
    <property type="component" value="Unplaced"/>
</dbReference>
<dbReference type="Proteomes" id="UP000694429">
    <property type="component" value="Unplaced"/>
</dbReference>
<dbReference type="Proteomes" id="UP000694542">
    <property type="component" value="Unplaced"/>
</dbReference>
<dbReference type="Proteomes" id="UP000805418">
    <property type="component" value="Unplaced"/>
</dbReference>
<dbReference type="GO" id="GO:0005886">
    <property type="term" value="C:plasma membrane"/>
    <property type="evidence" value="ECO:0000250"/>
    <property type="project" value="UniProtKB"/>
</dbReference>
<dbReference type="GO" id="GO:1902495">
    <property type="term" value="C:transmembrane transporter complex"/>
    <property type="evidence" value="ECO:0000318"/>
    <property type="project" value="GO_Central"/>
</dbReference>
<dbReference type="GO" id="GO:0005230">
    <property type="term" value="F:extracellular ligand-gated monoatomic ion channel activity"/>
    <property type="evidence" value="ECO:0007669"/>
    <property type="project" value="InterPro"/>
</dbReference>
<dbReference type="GO" id="GO:0099094">
    <property type="term" value="F:ligand-gated monoatomic cation channel activity"/>
    <property type="evidence" value="ECO:0000250"/>
    <property type="project" value="UniProtKB"/>
</dbReference>
<dbReference type="GO" id="GO:0160128">
    <property type="term" value="F:pH-gated monoatomic ion channel activity"/>
    <property type="evidence" value="ECO:0000250"/>
    <property type="project" value="UniProtKB"/>
</dbReference>
<dbReference type="GO" id="GO:0004888">
    <property type="term" value="F:transmembrane signaling receptor activity"/>
    <property type="evidence" value="ECO:0007669"/>
    <property type="project" value="InterPro"/>
</dbReference>
<dbReference type="GO" id="GO:0034220">
    <property type="term" value="P:monoatomic ion transmembrane transport"/>
    <property type="evidence" value="ECO:0000318"/>
    <property type="project" value="GO_Central"/>
</dbReference>
<dbReference type="CDD" id="cd18994">
    <property type="entry name" value="LGIC_ECD_ZAC"/>
    <property type="match status" value="1"/>
</dbReference>
<dbReference type="CDD" id="cd19065">
    <property type="entry name" value="LGIC_TM_ZAC"/>
    <property type="match status" value="1"/>
</dbReference>
<dbReference type="FunFam" id="1.20.58.390:FF:000068">
    <property type="entry name" value="zinc-activated ligand-gated ion channel"/>
    <property type="match status" value="1"/>
</dbReference>
<dbReference type="FunFam" id="2.70.170.10:FF:000037">
    <property type="entry name" value="zinc-activated ligand-gated ion channel"/>
    <property type="match status" value="1"/>
</dbReference>
<dbReference type="Gene3D" id="2.70.170.10">
    <property type="entry name" value="Neurotransmitter-gated ion-channel ligand-binding domain"/>
    <property type="match status" value="1"/>
</dbReference>
<dbReference type="Gene3D" id="1.20.58.390">
    <property type="entry name" value="Neurotransmitter-gated ion-channel transmembrane domain"/>
    <property type="match status" value="1"/>
</dbReference>
<dbReference type="InterPro" id="IPR006202">
    <property type="entry name" value="Neur_chan_lig-bd"/>
</dbReference>
<dbReference type="InterPro" id="IPR036734">
    <property type="entry name" value="Neur_chan_lig-bd_sf"/>
</dbReference>
<dbReference type="InterPro" id="IPR006201">
    <property type="entry name" value="Neur_channel"/>
</dbReference>
<dbReference type="InterPro" id="IPR036719">
    <property type="entry name" value="Neuro-gated_channel_TM_sf"/>
</dbReference>
<dbReference type="InterPro" id="IPR038050">
    <property type="entry name" value="Neuro_actylchol_rec"/>
</dbReference>
<dbReference type="InterPro" id="IPR006029">
    <property type="entry name" value="Neurotrans-gated_channel_TM"/>
</dbReference>
<dbReference type="InterPro" id="IPR018000">
    <property type="entry name" value="Neurotransmitter_ion_chnl_CS"/>
</dbReference>
<dbReference type="PANTHER" id="PTHR18945">
    <property type="entry name" value="NEUROTRANSMITTER GATED ION CHANNEL"/>
    <property type="match status" value="1"/>
</dbReference>
<dbReference type="Pfam" id="PF02931">
    <property type="entry name" value="Neur_chan_LBD"/>
    <property type="match status" value="1"/>
</dbReference>
<dbReference type="Pfam" id="PF02932">
    <property type="entry name" value="Neur_chan_memb"/>
    <property type="match status" value="1"/>
</dbReference>
<dbReference type="SUPFAM" id="SSF90112">
    <property type="entry name" value="Neurotransmitter-gated ion-channel transmembrane pore"/>
    <property type="match status" value="1"/>
</dbReference>
<dbReference type="SUPFAM" id="SSF63712">
    <property type="entry name" value="Nicotinic receptor ligand binding domain-like"/>
    <property type="match status" value="1"/>
</dbReference>
<dbReference type="PROSITE" id="PS00236">
    <property type="entry name" value="NEUROTR_ION_CHANNEL"/>
    <property type="match status" value="1"/>
</dbReference>
<evidence type="ECO:0000250" key="1"/>
<evidence type="ECO:0000250" key="2">
    <source>
        <dbReference type="UniProtKB" id="Q401N2"/>
    </source>
</evidence>
<evidence type="ECO:0000255" key="3"/>
<evidence type="ECO:0000256" key="4">
    <source>
        <dbReference type="SAM" id="MobiDB-lite"/>
    </source>
</evidence>
<evidence type="ECO:0000303" key="5">
    <source>
    </source>
</evidence>
<evidence type="ECO:0000305" key="6"/>
<evidence type="ECO:0000312" key="7">
    <source>
        <dbReference type="EMBL" id="AAO20972.1"/>
    </source>
</evidence>